<name>EI3D2_DROPE</name>
<gene>
    <name evidence="2" type="primary">eIF3d2</name>
    <name evidence="2" type="synonym">eIF3-S7-2</name>
    <name type="ORF">GL21571</name>
</gene>
<reference key="1">
    <citation type="journal article" date="2007" name="Nature">
        <title>Evolution of genes and genomes on the Drosophila phylogeny.</title>
        <authorList>
            <consortium name="Drosophila 12 genomes consortium"/>
        </authorList>
    </citation>
    <scope>NUCLEOTIDE SEQUENCE [LARGE SCALE GENOMIC DNA]</scope>
    <source>
        <strain>MSH-3 / Tucson 14011-0111.49</strain>
    </source>
</reference>
<feature type="chain" id="PRO_0000364153" description="Eukaryotic translation initiation factor 3 subunit D-2">
    <location>
        <begin position="1"/>
        <end position="545"/>
    </location>
</feature>
<feature type="region of interest" description="Disordered" evidence="3">
    <location>
        <begin position="99"/>
        <end position="158"/>
    </location>
</feature>
<feature type="region of interest" description="RNA gate" evidence="1">
    <location>
        <begin position="287"/>
        <end position="301"/>
    </location>
</feature>
<feature type="compositionally biased region" description="Basic residues" evidence="3">
    <location>
        <begin position="99"/>
        <end position="113"/>
    </location>
</feature>
<feature type="compositionally biased region" description="Gly residues" evidence="3">
    <location>
        <begin position="114"/>
        <end position="127"/>
    </location>
</feature>
<feature type="compositionally biased region" description="Basic and acidic residues" evidence="3">
    <location>
        <begin position="133"/>
        <end position="145"/>
    </location>
</feature>
<comment type="function">
    <text evidence="2">mRNA cap-binding component of the eukaryotic translation initiation factor 3 (eIF-3) complex, which is involved in protein synthesis of a specialized repertoire of mRNAs and, together with other initiation factors, stimulates binding of mRNA and methionyl-tRNAi to the 40S ribosome. The eIF-3 complex specifically targets and initiates translation of a subset of mRNAs involved in cell proliferation. In the eIF-3 complex, eif3d specifically recognizes and binds the 7-methylguanosine cap of a subset of mRNAs.</text>
</comment>
<comment type="subunit">
    <text evidence="2">Component of the eukaryotic translation initiation factor 3 (eIF-3) complex. The eIF-3 complex interacts with pix.</text>
</comment>
<comment type="subcellular location">
    <subcellularLocation>
        <location evidence="2">Cytoplasm</location>
    </subcellularLocation>
</comment>
<comment type="domain">
    <text evidence="2">The RNA gate region regulates mRNA cap recognition to prevent promiscuous mRNA-binding before assembly of eif3d into the full eukaryotic translation initiation factor 3 (eIF-3) complex.</text>
</comment>
<comment type="similarity">
    <text evidence="2">Belongs to the eIF-3 subunit D family.</text>
</comment>
<keyword id="KW-0963">Cytoplasm</keyword>
<keyword id="KW-0396">Initiation factor</keyword>
<keyword id="KW-0648">Protein biosynthesis</keyword>
<keyword id="KW-1185">Reference proteome</keyword>
<keyword id="KW-0694">RNA-binding</keyword>
<protein>
    <recommendedName>
        <fullName evidence="2">Eukaryotic translation initiation factor 3 subunit D-2</fullName>
        <shortName evidence="2">eIF3d-2</shortName>
    </recommendedName>
    <alternativeName>
        <fullName evidence="2">Eukaryotic translation initiation factor 3 subunit 7-2</fullName>
    </alternativeName>
</protein>
<evidence type="ECO:0000250" key="1">
    <source>
        <dbReference type="UniProtKB" id="K7IM66"/>
    </source>
</evidence>
<evidence type="ECO:0000255" key="2">
    <source>
        <dbReference type="HAMAP-Rule" id="MF_03003"/>
    </source>
</evidence>
<evidence type="ECO:0000256" key="3">
    <source>
        <dbReference type="SAM" id="MobiDB-lite"/>
    </source>
</evidence>
<dbReference type="EMBL" id="CH479182">
    <property type="protein sequence ID" value="EDW34456.1"/>
    <property type="molecule type" value="Genomic_DNA"/>
</dbReference>
<dbReference type="SMR" id="B4GFS1"/>
<dbReference type="STRING" id="7234.B4GFS1"/>
<dbReference type="EnsemblMetazoa" id="FBtr0187186">
    <property type="protein sequence ID" value="FBpp0185678"/>
    <property type="gene ID" value="FBgn0159164"/>
</dbReference>
<dbReference type="EnsemblMetazoa" id="XM_002017320.2">
    <property type="protein sequence ID" value="XP_002017356.1"/>
    <property type="gene ID" value="LOC6591866"/>
</dbReference>
<dbReference type="GeneID" id="6591866"/>
<dbReference type="KEGG" id="dpe:6591866"/>
<dbReference type="CTD" id="41475"/>
<dbReference type="eggNOG" id="KOG2479">
    <property type="taxonomic scope" value="Eukaryota"/>
</dbReference>
<dbReference type="HOGENOM" id="CLU_024521_2_0_1"/>
<dbReference type="OMA" id="CKHNGVI"/>
<dbReference type="OrthoDB" id="16538at2759"/>
<dbReference type="PhylomeDB" id="B4GFS1"/>
<dbReference type="Proteomes" id="UP000008744">
    <property type="component" value="Unassembled WGS sequence"/>
</dbReference>
<dbReference type="GO" id="GO:0016282">
    <property type="term" value="C:eukaryotic 43S preinitiation complex"/>
    <property type="evidence" value="ECO:0007669"/>
    <property type="project" value="UniProtKB-UniRule"/>
</dbReference>
<dbReference type="GO" id="GO:0033290">
    <property type="term" value="C:eukaryotic 48S preinitiation complex"/>
    <property type="evidence" value="ECO:0007669"/>
    <property type="project" value="UniProtKB-UniRule"/>
</dbReference>
<dbReference type="GO" id="GO:0005852">
    <property type="term" value="C:eukaryotic translation initiation factor 3 complex"/>
    <property type="evidence" value="ECO:0000250"/>
    <property type="project" value="UniProtKB"/>
</dbReference>
<dbReference type="GO" id="GO:0098808">
    <property type="term" value="F:mRNA cap binding"/>
    <property type="evidence" value="ECO:0007669"/>
    <property type="project" value="UniProtKB-UniRule"/>
</dbReference>
<dbReference type="GO" id="GO:0003743">
    <property type="term" value="F:translation initiation factor activity"/>
    <property type="evidence" value="ECO:0000250"/>
    <property type="project" value="UniProtKB"/>
</dbReference>
<dbReference type="GO" id="GO:0002191">
    <property type="term" value="P:cap-dependent translational initiation"/>
    <property type="evidence" value="ECO:0007669"/>
    <property type="project" value="UniProtKB-UniRule"/>
</dbReference>
<dbReference type="GO" id="GO:0001732">
    <property type="term" value="P:formation of cytoplasmic translation initiation complex"/>
    <property type="evidence" value="ECO:0007669"/>
    <property type="project" value="UniProtKB-UniRule"/>
</dbReference>
<dbReference type="GO" id="GO:0006446">
    <property type="term" value="P:regulation of translational initiation"/>
    <property type="evidence" value="ECO:0000250"/>
    <property type="project" value="UniProtKB"/>
</dbReference>
<dbReference type="HAMAP" id="MF_03003">
    <property type="entry name" value="eIF3d"/>
    <property type="match status" value="1"/>
</dbReference>
<dbReference type="InterPro" id="IPR007783">
    <property type="entry name" value="eIF3d"/>
</dbReference>
<dbReference type="PANTHER" id="PTHR12399">
    <property type="entry name" value="EUKARYOTIC TRANSLATION INITIATION FACTOR 3 SUBUNIT 7"/>
    <property type="match status" value="1"/>
</dbReference>
<dbReference type="PANTHER" id="PTHR12399:SF0">
    <property type="entry name" value="EUKARYOTIC TRANSLATION INITIATION FACTOR 3 SUBUNIT D"/>
    <property type="match status" value="1"/>
</dbReference>
<dbReference type="Pfam" id="PF05091">
    <property type="entry name" value="eIF-3_zeta"/>
    <property type="match status" value="1"/>
</dbReference>
<dbReference type="PIRSF" id="PIRSF016281">
    <property type="entry name" value="EIF-3_zeta"/>
    <property type="match status" value="1"/>
</dbReference>
<accession>B4GFS1</accession>
<proteinExistence type="inferred from homology"/>
<organism>
    <name type="scientific">Drosophila persimilis</name>
    <name type="common">Fruit fly</name>
    <dbReference type="NCBI Taxonomy" id="7234"/>
    <lineage>
        <taxon>Eukaryota</taxon>
        <taxon>Metazoa</taxon>
        <taxon>Ecdysozoa</taxon>
        <taxon>Arthropoda</taxon>
        <taxon>Hexapoda</taxon>
        <taxon>Insecta</taxon>
        <taxon>Pterygota</taxon>
        <taxon>Neoptera</taxon>
        <taxon>Endopterygota</taxon>
        <taxon>Diptera</taxon>
        <taxon>Brachycera</taxon>
        <taxon>Muscomorpha</taxon>
        <taxon>Ephydroidea</taxon>
        <taxon>Drosophilidae</taxon>
        <taxon>Drosophila</taxon>
        <taxon>Sophophora</taxon>
    </lineage>
</organism>
<sequence length="545" mass="62205">MSGRAPFIKPVLEYNEHGWGPCEELSVDVPYQPFCKSDRVGKISDWTAPPTERKFANKYVSSFGNSNQYAYFHEDDESTYHLVDTSGFKGFRPFQRGRFRGNIRNNPRTRGRTGRGGAVTGIGGNQPGVGVNERTKYGKGRDNRRQMGRRFGRNAPTRMRESSVVVRSDWVSIEEIDFPRLLKLSLPNVKEGQDVVTCGSLEYYDKTYDRINVKNERPLLKTDRIIHTLTTTDDPVIRRLSKTIGNIFATDEILATIMCCTRSNYSWDVVFDKVGNKIFLDKRDNAQFDLLTVNETALEPPLDEEGSINSPHSLAMEATLINHNFCQQVLRGGDQKKYQFEEPYPLEESGVDLVSIGYRYKQWDLGNNIILIARCKHNGVLQGPNGEVQFLSIRALNEWDSKASNSLEWRQKLDTQHGAVLASELRNNACKLARWTVESVLSGSDQLKLGYVSRVIPRDHLRHVILRTQQFKPQEFSTQINLSMDNAWGILRCLIDIVMKQPDGKYLLMKDPNKPMVRLYDVPENAFESSDEDDLSDDKLFLLSN</sequence>